<comment type="function">
    <text evidence="3 4">Binds double-stranded DNA (dsDNA) with high affinity (PubMed:23110062). Binds double-stranded RNA (PubMed:23110062). Binds single-stranded DNA with lower affinity and with a preference for purine-rich sequences (PubMed:23110062). Shows residual nuclease activity for dsDNA (PubMed:23110062). May facilitate blood meal intake by lowering the local viscosity created by the release of host DNA (PubMed:23110062).</text>
</comment>
<comment type="cofactor">
    <cofactor evidence="3">
        <name>a divalent metal cation</name>
        <dbReference type="ChEBI" id="CHEBI:60240"/>
    </cofactor>
</comment>
<comment type="biophysicochemical properties">
    <phDependence>
        <text evidence="3">Active from pH 5.5 to 11.0.</text>
    </phDependence>
</comment>
<comment type="subcellular location">
    <subcellularLocation>
        <location evidence="6">Secreted</location>
    </subcellularLocation>
</comment>
<comment type="tissue specificity">
    <text evidence="3">Saliva (at protein level).</text>
</comment>
<comment type="similarity">
    <text evidence="5">Belongs to the DNA/RNA non-specific endonuclease family.</text>
</comment>
<name>SAL1_GLOMM</name>
<protein>
    <recommendedName>
        <fullName evidence="5">Salivary protein Tsal1</fullName>
        <ecNumber evidence="3">3.1.-.-</ecNumber>
    </recommendedName>
</protein>
<sequence>MALKLVYGVFTLALLGISSVNADCSLKIPESVENEKTPVIMVRKSLKTFEYDLFQPTGEVTNFPERTELLLACTGAQNYFKNGEESVTLMCHNNEFDDGQGNGLDLFTCVKTPTAELRKTKERCSLGDLYVYDVVFRISEEELVGPVYDICYNEYSQKPAYSRNIINGAAVNYRVPESETDLTVSLAKDFTTRDVNNYFKLENQKQRFQGYTIDGKPLVDDKNFFAPGQLAPDTSMITPADKLSTYDYANIVPQYKTVYDGNVWRVENITRDLAVNRQAKFEVYTGGYERLTALHNGKEEEIFLSAKKYVHEIPKYIYKFVVDKENDAGIVFFTLNNPHVKNVKGTEFCKNQCEEANVLDSNFKDWTQGYTFCCTWNNVKDYVRALPQDIEINNLLKFN</sequence>
<proteinExistence type="evidence at protein level"/>
<gene>
    <name evidence="4" type="primary">Tsal1</name>
</gene>
<keyword id="KW-0255">Endonuclease</keyword>
<keyword id="KW-0325">Glycoprotein</keyword>
<keyword id="KW-0378">Hydrolase</keyword>
<keyword id="KW-0540">Nuclease</keyword>
<keyword id="KW-0964">Secreted</keyword>
<keyword id="KW-0732">Signal</keyword>
<evidence type="ECO:0000255" key="1"/>
<evidence type="ECO:0000255" key="2">
    <source>
        <dbReference type="PROSITE-ProRule" id="PRU00498"/>
    </source>
</evidence>
<evidence type="ECO:0000269" key="3">
    <source>
    </source>
</evidence>
<evidence type="ECO:0000303" key="4">
    <source>
    </source>
</evidence>
<evidence type="ECO:0000305" key="5"/>
<evidence type="ECO:0000305" key="6">
    <source>
    </source>
</evidence>
<evidence type="ECO:0000312" key="7">
    <source>
        <dbReference type="EMBL" id="AAF82097.1"/>
    </source>
</evidence>
<evidence type="ECO:0000312" key="8">
    <source>
        <dbReference type="EMBL" id="ADD20565.1"/>
    </source>
</evidence>
<evidence type="ECO:0000312" key="9">
    <source>
        <dbReference type="Proteomes" id="UP000092444"/>
    </source>
</evidence>
<feature type="signal peptide" evidence="1">
    <location>
        <begin position="1"/>
        <end position="22"/>
    </location>
</feature>
<feature type="chain" id="PRO_5014569828" description="Salivary protein Tsal1" evidence="1">
    <location>
        <begin position="23"/>
        <end position="399"/>
    </location>
</feature>
<feature type="glycosylation site" description="N-linked (GlcNAc...) asparagine" evidence="2">
    <location>
        <position position="268"/>
    </location>
</feature>
<feature type="sequence conflict" description="In Ref. 2; AAF82097." evidence="5" ref="2">
    <original>L</original>
    <variation>I</variation>
    <location>
        <position position="15"/>
    </location>
</feature>
<dbReference type="EC" id="3.1.-.-" evidence="3"/>
<dbReference type="EMBL" id="CCAG010021505">
    <property type="status" value="NOT_ANNOTATED_CDS"/>
    <property type="molecule type" value="Genomic_DNA"/>
</dbReference>
<dbReference type="EMBL" id="AF259958">
    <property type="protein sequence ID" value="AAF82097.1"/>
    <property type="molecule type" value="mRNA"/>
</dbReference>
<dbReference type="EMBL" id="EZ424289">
    <property type="protein sequence ID" value="ADD20565.1"/>
    <property type="molecule type" value="mRNA"/>
</dbReference>
<dbReference type="STRING" id="37546.D3TS87"/>
<dbReference type="EnsemblMetazoa" id="GMOY012071-RA">
    <property type="protein sequence ID" value="GMOY012071-PA"/>
    <property type="gene ID" value="GMOY012071"/>
</dbReference>
<dbReference type="VEuPathDB" id="VectorBase:GMOY012071"/>
<dbReference type="Proteomes" id="UP000092444">
    <property type="component" value="Unassembled WGS sequence"/>
</dbReference>
<dbReference type="GO" id="GO:0005576">
    <property type="term" value="C:extracellular region"/>
    <property type="evidence" value="ECO:0000314"/>
    <property type="project" value="UniProtKB"/>
</dbReference>
<dbReference type="GO" id="GO:0005743">
    <property type="term" value="C:mitochondrial inner membrane"/>
    <property type="evidence" value="ECO:0007669"/>
    <property type="project" value="TreeGrafter"/>
</dbReference>
<dbReference type="GO" id="GO:0005634">
    <property type="term" value="C:nucleus"/>
    <property type="evidence" value="ECO:0007669"/>
    <property type="project" value="TreeGrafter"/>
</dbReference>
<dbReference type="GO" id="GO:0004536">
    <property type="term" value="F:DNA nuclease activity"/>
    <property type="evidence" value="ECO:0000314"/>
    <property type="project" value="UniProtKB"/>
</dbReference>
<dbReference type="GO" id="GO:0003690">
    <property type="term" value="F:double-stranded DNA binding"/>
    <property type="evidence" value="ECO:0000314"/>
    <property type="project" value="UniProtKB"/>
</dbReference>
<dbReference type="GO" id="GO:0003725">
    <property type="term" value="F:double-stranded RNA binding"/>
    <property type="evidence" value="ECO:0000314"/>
    <property type="project" value="UniProtKB"/>
</dbReference>
<dbReference type="GO" id="GO:0046872">
    <property type="term" value="F:metal ion binding"/>
    <property type="evidence" value="ECO:0007669"/>
    <property type="project" value="InterPro"/>
</dbReference>
<dbReference type="GO" id="GO:0004521">
    <property type="term" value="F:RNA endonuclease activity"/>
    <property type="evidence" value="ECO:0007669"/>
    <property type="project" value="TreeGrafter"/>
</dbReference>
<dbReference type="GO" id="GO:0003697">
    <property type="term" value="F:single-stranded DNA binding"/>
    <property type="evidence" value="ECO:0000314"/>
    <property type="project" value="UniProtKB"/>
</dbReference>
<dbReference type="GO" id="GO:0000014">
    <property type="term" value="F:single-stranded DNA endodeoxyribonuclease activity"/>
    <property type="evidence" value="ECO:0007669"/>
    <property type="project" value="TreeGrafter"/>
</dbReference>
<dbReference type="GO" id="GO:0006309">
    <property type="term" value="P:apoptotic DNA fragmentation"/>
    <property type="evidence" value="ECO:0007669"/>
    <property type="project" value="TreeGrafter"/>
</dbReference>
<dbReference type="Gene3D" id="3.40.570.10">
    <property type="entry name" value="Extracellular Endonuclease, subunit A"/>
    <property type="match status" value="1"/>
</dbReference>
<dbReference type="InterPro" id="IPR044929">
    <property type="entry name" value="DNA/RNA_non-sp_Endonuclease_sf"/>
</dbReference>
<dbReference type="InterPro" id="IPR001604">
    <property type="entry name" value="Endo_G_ENPP1-like_dom"/>
</dbReference>
<dbReference type="InterPro" id="IPR044925">
    <property type="entry name" value="His-Me_finger_sf"/>
</dbReference>
<dbReference type="InterPro" id="IPR040255">
    <property type="entry name" value="Non-specific_endonuclease"/>
</dbReference>
<dbReference type="PANTHER" id="PTHR13966">
    <property type="entry name" value="ENDONUCLEASE RELATED"/>
    <property type="match status" value="1"/>
</dbReference>
<dbReference type="PANTHER" id="PTHR13966:SF17">
    <property type="entry name" value="ENDONUCLEASE-RELATED"/>
    <property type="match status" value="1"/>
</dbReference>
<dbReference type="Pfam" id="PF01223">
    <property type="entry name" value="Endonuclease_NS"/>
    <property type="match status" value="1"/>
</dbReference>
<dbReference type="SMART" id="SM00892">
    <property type="entry name" value="Endonuclease_NS"/>
    <property type="match status" value="1"/>
</dbReference>
<dbReference type="SUPFAM" id="SSF54060">
    <property type="entry name" value="His-Me finger endonucleases"/>
    <property type="match status" value="1"/>
</dbReference>
<reference evidence="9" key="1">
    <citation type="submission" date="2014-03" db="EMBL/GenBank/DDBJ databases">
        <title>Genome Sequence of the Tsetse Fly (Glossina morsitans): Vector of African Trypanosomiasis.</title>
        <authorList>
            <consortium name="International Glossina Genome Initiative W.H.O."/>
            <person name="Lawson D."/>
        </authorList>
    </citation>
    <scope>NUCLEOTIDE SEQUENCE [LARGE SCALE GENOMIC DNA]</scope>
    <source>
        <strain evidence="9">Yale</strain>
    </source>
</reference>
<reference evidence="7" key="2">
    <citation type="journal article" date="2001" name="Insect Mol. Biol.">
        <title>Characterization of genes expressed in the salivary glands of the tsetse fly, Glossina morsitans morsitans.</title>
        <authorList>
            <person name="Li S."/>
            <person name="Kwon J."/>
            <person name="Aksoy S."/>
        </authorList>
    </citation>
    <scope>NUCLEOTIDE SEQUENCE [LARGE SCALE MRNA]</scope>
    <source>
        <tissue evidence="7">Salivary gland</tissue>
    </source>
</reference>
<reference evidence="8" key="3">
    <citation type="journal article" date="2010" name="BMC Genomics">
        <title>An insight into the sialome of Glossina morsitans morsitans.</title>
        <authorList>
            <person name="Alves-Silva J."/>
            <person name="Ribeiro J.M."/>
            <person name="Van Den Abbeele J."/>
            <person name="Attardo G."/>
            <person name="Hao Z."/>
            <person name="Haines L.R."/>
            <person name="Soares M.B."/>
            <person name="Berriman M."/>
            <person name="Aksoy S."/>
            <person name="Lehane M.J."/>
        </authorList>
    </citation>
    <scope>NUCLEOTIDE SEQUENCE [LARGE SCALE MRNA]</scope>
    <source>
        <tissue evidence="8">Salivary gland</tissue>
    </source>
</reference>
<reference evidence="5" key="4">
    <citation type="journal article" date="2012" name="PLoS ONE">
        <title>Tsetse salivary gland proteins 1 and 2 are high affinity nucleic acid binding proteins with residual nuclease activity.</title>
        <authorList>
            <person name="Caljon G."/>
            <person name="De Ridder K."/>
            <person name="Stijlemans B."/>
            <person name="Coosemans M."/>
            <person name="Magez S."/>
            <person name="De Baetselier P."/>
            <person name="Van Den Abbeele J."/>
        </authorList>
    </citation>
    <scope>FUNCTION</scope>
    <scope>CATALYTIC ACTIVITY</scope>
    <scope>COFACTOR</scope>
    <scope>BIOPHYSICOCHEMICAL PROPERTIES</scope>
    <scope>SUBCELLULAR LOCATION</scope>
    <scope>TISSUE SPECIFICITY</scope>
</reference>
<organism evidence="8">
    <name type="scientific">Glossina morsitans morsitans</name>
    <name type="common">Savannah tsetse fly</name>
    <dbReference type="NCBI Taxonomy" id="37546"/>
    <lineage>
        <taxon>Eukaryota</taxon>
        <taxon>Metazoa</taxon>
        <taxon>Ecdysozoa</taxon>
        <taxon>Arthropoda</taxon>
        <taxon>Hexapoda</taxon>
        <taxon>Insecta</taxon>
        <taxon>Pterygota</taxon>
        <taxon>Neoptera</taxon>
        <taxon>Endopterygota</taxon>
        <taxon>Diptera</taxon>
        <taxon>Brachycera</taxon>
        <taxon>Muscomorpha</taxon>
        <taxon>Hippoboscoidea</taxon>
        <taxon>Glossinidae</taxon>
        <taxon>Glossina</taxon>
    </lineage>
</organism>
<accession>D3TS87</accession>
<accession>Q9NBA5</accession>